<feature type="chain" id="PRO_1000140042" description="Multifunctional CCA protein">
    <location>
        <begin position="1"/>
        <end position="410"/>
    </location>
</feature>
<feature type="domain" description="HD" evidence="1">
    <location>
        <begin position="225"/>
        <end position="326"/>
    </location>
</feature>
<feature type="binding site" evidence="1">
    <location>
        <position position="8"/>
    </location>
    <ligand>
        <name>ATP</name>
        <dbReference type="ChEBI" id="CHEBI:30616"/>
    </ligand>
</feature>
<feature type="binding site" evidence="1">
    <location>
        <position position="8"/>
    </location>
    <ligand>
        <name>CTP</name>
        <dbReference type="ChEBI" id="CHEBI:37563"/>
    </ligand>
</feature>
<feature type="binding site" evidence="1">
    <location>
        <position position="11"/>
    </location>
    <ligand>
        <name>ATP</name>
        <dbReference type="ChEBI" id="CHEBI:30616"/>
    </ligand>
</feature>
<feature type="binding site" evidence="1">
    <location>
        <position position="11"/>
    </location>
    <ligand>
        <name>CTP</name>
        <dbReference type="ChEBI" id="CHEBI:37563"/>
    </ligand>
</feature>
<feature type="binding site" evidence="1">
    <location>
        <position position="21"/>
    </location>
    <ligand>
        <name>Mg(2+)</name>
        <dbReference type="ChEBI" id="CHEBI:18420"/>
    </ligand>
</feature>
<feature type="binding site" evidence="1">
    <location>
        <position position="23"/>
    </location>
    <ligand>
        <name>Mg(2+)</name>
        <dbReference type="ChEBI" id="CHEBI:18420"/>
    </ligand>
</feature>
<feature type="binding site" evidence="1">
    <location>
        <position position="91"/>
    </location>
    <ligand>
        <name>ATP</name>
        <dbReference type="ChEBI" id="CHEBI:30616"/>
    </ligand>
</feature>
<feature type="binding site" evidence="1">
    <location>
        <position position="91"/>
    </location>
    <ligand>
        <name>CTP</name>
        <dbReference type="ChEBI" id="CHEBI:37563"/>
    </ligand>
</feature>
<feature type="binding site" evidence="1">
    <location>
        <position position="137"/>
    </location>
    <ligand>
        <name>ATP</name>
        <dbReference type="ChEBI" id="CHEBI:30616"/>
    </ligand>
</feature>
<feature type="binding site" evidence="1">
    <location>
        <position position="137"/>
    </location>
    <ligand>
        <name>CTP</name>
        <dbReference type="ChEBI" id="CHEBI:37563"/>
    </ligand>
</feature>
<feature type="binding site" evidence="1">
    <location>
        <position position="140"/>
    </location>
    <ligand>
        <name>ATP</name>
        <dbReference type="ChEBI" id="CHEBI:30616"/>
    </ligand>
</feature>
<feature type="binding site" evidence="1">
    <location>
        <position position="140"/>
    </location>
    <ligand>
        <name>CTP</name>
        <dbReference type="ChEBI" id="CHEBI:37563"/>
    </ligand>
</feature>
<organism>
    <name type="scientific">Neisseria gonorrhoeae (strain NCCP11945)</name>
    <dbReference type="NCBI Taxonomy" id="521006"/>
    <lineage>
        <taxon>Bacteria</taxon>
        <taxon>Pseudomonadati</taxon>
        <taxon>Pseudomonadota</taxon>
        <taxon>Betaproteobacteria</taxon>
        <taxon>Neisseriales</taxon>
        <taxon>Neisseriaceae</taxon>
        <taxon>Neisseria</taxon>
    </lineage>
</organism>
<accession>B4RLV5</accession>
<gene>
    <name evidence="1" type="primary">cca</name>
    <name type="ordered locus">NGK_1115</name>
</gene>
<keyword id="KW-0067">ATP-binding</keyword>
<keyword id="KW-0378">Hydrolase</keyword>
<keyword id="KW-0460">Magnesium</keyword>
<keyword id="KW-0479">Metal-binding</keyword>
<keyword id="KW-0511">Multifunctional enzyme</keyword>
<keyword id="KW-0533">Nickel</keyword>
<keyword id="KW-0547">Nucleotide-binding</keyword>
<keyword id="KW-0548">Nucleotidyltransferase</keyword>
<keyword id="KW-0692">RNA repair</keyword>
<keyword id="KW-0694">RNA-binding</keyword>
<keyword id="KW-0808">Transferase</keyword>
<keyword id="KW-0819">tRNA processing</keyword>
<dbReference type="EC" id="2.7.7.72" evidence="1"/>
<dbReference type="EC" id="3.1.3.-" evidence="1"/>
<dbReference type="EC" id="3.1.4.-" evidence="1"/>
<dbReference type="EMBL" id="CP001050">
    <property type="protein sequence ID" value="ACF29792.1"/>
    <property type="molecule type" value="Genomic_DNA"/>
</dbReference>
<dbReference type="RefSeq" id="WP_003701338.1">
    <property type="nucleotide sequence ID" value="NC_011035.1"/>
</dbReference>
<dbReference type="SMR" id="B4RLV5"/>
<dbReference type="KEGG" id="ngk:NGK_1115"/>
<dbReference type="HOGENOM" id="CLU_015961_1_1_4"/>
<dbReference type="Proteomes" id="UP000002564">
    <property type="component" value="Chromosome"/>
</dbReference>
<dbReference type="GO" id="GO:0005524">
    <property type="term" value="F:ATP binding"/>
    <property type="evidence" value="ECO:0007669"/>
    <property type="project" value="UniProtKB-UniRule"/>
</dbReference>
<dbReference type="GO" id="GO:0004810">
    <property type="term" value="F:CCA tRNA nucleotidyltransferase activity"/>
    <property type="evidence" value="ECO:0007669"/>
    <property type="project" value="UniProtKB-UniRule"/>
</dbReference>
<dbReference type="GO" id="GO:0004112">
    <property type="term" value="F:cyclic-nucleotide phosphodiesterase activity"/>
    <property type="evidence" value="ECO:0007669"/>
    <property type="project" value="UniProtKB-UniRule"/>
</dbReference>
<dbReference type="GO" id="GO:0000287">
    <property type="term" value="F:magnesium ion binding"/>
    <property type="evidence" value="ECO:0007669"/>
    <property type="project" value="UniProtKB-UniRule"/>
</dbReference>
<dbReference type="GO" id="GO:0016791">
    <property type="term" value="F:phosphatase activity"/>
    <property type="evidence" value="ECO:0007669"/>
    <property type="project" value="UniProtKB-UniRule"/>
</dbReference>
<dbReference type="GO" id="GO:0000049">
    <property type="term" value="F:tRNA binding"/>
    <property type="evidence" value="ECO:0007669"/>
    <property type="project" value="UniProtKB-UniRule"/>
</dbReference>
<dbReference type="GO" id="GO:0042245">
    <property type="term" value="P:RNA repair"/>
    <property type="evidence" value="ECO:0007669"/>
    <property type="project" value="UniProtKB-KW"/>
</dbReference>
<dbReference type="GO" id="GO:0001680">
    <property type="term" value="P:tRNA 3'-terminal CCA addition"/>
    <property type="evidence" value="ECO:0007669"/>
    <property type="project" value="UniProtKB-UniRule"/>
</dbReference>
<dbReference type="CDD" id="cd00077">
    <property type="entry name" value="HDc"/>
    <property type="match status" value="1"/>
</dbReference>
<dbReference type="CDD" id="cd05398">
    <property type="entry name" value="NT_ClassII-CCAase"/>
    <property type="match status" value="1"/>
</dbReference>
<dbReference type="Gene3D" id="3.30.460.10">
    <property type="entry name" value="Beta Polymerase, domain 2"/>
    <property type="match status" value="1"/>
</dbReference>
<dbReference type="Gene3D" id="1.10.3090.10">
    <property type="entry name" value="cca-adding enzyme, domain 2"/>
    <property type="match status" value="1"/>
</dbReference>
<dbReference type="HAMAP" id="MF_01261">
    <property type="entry name" value="CCA_bact_type1"/>
    <property type="match status" value="1"/>
</dbReference>
<dbReference type="HAMAP" id="MF_01262">
    <property type="entry name" value="CCA_bact_type2"/>
    <property type="match status" value="1"/>
</dbReference>
<dbReference type="InterPro" id="IPR012006">
    <property type="entry name" value="CCA_bact"/>
</dbReference>
<dbReference type="InterPro" id="IPR003607">
    <property type="entry name" value="HD/PDEase_dom"/>
</dbReference>
<dbReference type="InterPro" id="IPR006674">
    <property type="entry name" value="HD_domain"/>
</dbReference>
<dbReference type="InterPro" id="IPR043519">
    <property type="entry name" value="NT_sf"/>
</dbReference>
<dbReference type="InterPro" id="IPR002646">
    <property type="entry name" value="PolA_pol_head_dom"/>
</dbReference>
<dbReference type="InterPro" id="IPR032828">
    <property type="entry name" value="PolyA_RNA-bd"/>
</dbReference>
<dbReference type="InterPro" id="IPR050124">
    <property type="entry name" value="tRNA_CCA-adding_enzyme"/>
</dbReference>
<dbReference type="NCBIfam" id="NF008137">
    <property type="entry name" value="PRK10885.1"/>
    <property type="match status" value="1"/>
</dbReference>
<dbReference type="PANTHER" id="PTHR47545">
    <property type="entry name" value="MULTIFUNCTIONAL CCA PROTEIN"/>
    <property type="match status" value="1"/>
</dbReference>
<dbReference type="PANTHER" id="PTHR47545:SF1">
    <property type="entry name" value="MULTIFUNCTIONAL CCA PROTEIN"/>
    <property type="match status" value="1"/>
</dbReference>
<dbReference type="Pfam" id="PF01966">
    <property type="entry name" value="HD"/>
    <property type="match status" value="1"/>
</dbReference>
<dbReference type="Pfam" id="PF01743">
    <property type="entry name" value="PolyA_pol"/>
    <property type="match status" value="1"/>
</dbReference>
<dbReference type="Pfam" id="PF12627">
    <property type="entry name" value="PolyA_pol_RNAbd"/>
    <property type="match status" value="1"/>
</dbReference>
<dbReference type="PIRSF" id="PIRSF000813">
    <property type="entry name" value="CCA_bact"/>
    <property type="match status" value="1"/>
</dbReference>
<dbReference type="SUPFAM" id="SSF81301">
    <property type="entry name" value="Nucleotidyltransferase"/>
    <property type="match status" value="1"/>
</dbReference>
<dbReference type="SUPFAM" id="SSF81891">
    <property type="entry name" value="Poly A polymerase C-terminal region-like"/>
    <property type="match status" value="1"/>
</dbReference>
<dbReference type="PROSITE" id="PS51831">
    <property type="entry name" value="HD"/>
    <property type="match status" value="1"/>
</dbReference>
<proteinExistence type="inferred from homology"/>
<reference key="1">
    <citation type="journal article" date="2008" name="J. Bacteriol.">
        <title>Complete genome sequence of Neisseria gonorrhoeae NCCP11945.</title>
        <authorList>
            <person name="Chung G.T."/>
            <person name="Yoo J.S."/>
            <person name="Oh H.B."/>
            <person name="Lee Y.S."/>
            <person name="Cha S.H."/>
            <person name="Kim S.J."/>
            <person name="Yoo C.K."/>
        </authorList>
    </citation>
    <scope>NUCLEOTIDE SEQUENCE [LARGE SCALE GENOMIC DNA]</scope>
    <source>
        <strain>NCCP11945</strain>
    </source>
</reference>
<sequence>MQTYLVGGAVRDYLLGLPVKDRDWVVVGADAQTMLAQGFQPVGKDFPVFLHPKTHEEYALARTERKTAKGYAGFSFHADKDVTLEQDLMRRDLTINAMAQDADGKIIDPFGGQRDLAAGILRHVSPAFAEDPVRILRAARFAARYGFEIAEETIKLMRQMVENGEADALVAERVWQELAKGLMEKNPRKMIEMLRECGALQVLLPEVDALFGVPQRADYHPEIDSGIHTLMTLQRAADMGLSLPERYAALLHDLGKAKTPPDILPRHHGHDINGVEPVREVNQRLRAPRQCAELAELVCRWHIIFHQVGQLKSQTILNVLKKTDAFRRPERFQTALNVCIADTQGRLNREHTPYPQRAHWLALLEAANQADSGKIAAECRAQGKAHFIAEQIDRARLAQIAPLQKAFRGA</sequence>
<name>CCA_NEIG2</name>
<comment type="function">
    <text evidence="1">Catalyzes the addition and repair of the essential 3'-terminal CCA sequence in tRNAs without using a nucleic acid template. Adds these three nucleotides in the order of C, C, and A to the tRNA nucleotide-73, using CTP and ATP as substrates and producing inorganic pyrophosphate. tRNA 3'-terminal CCA addition is required both for tRNA processing and repair. Also involved in tRNA surveillance by mediating tandem CCA addition to generate a CCACCA at the 3' terminus of unstable tRNAs. While stable tRNAs receive only 3'-terminal CCA, unstable tRNAs are marked with CCACCA and rapidly degraded.</text>
</comment>
<comment type="catalytic activity">
    <reaction evidence="1">
        <text>a tRNA precursor + 2 CTP + ATP = a tRNA with a 3' CCA end + 3 diphosphate</text>
        <dbReference type="Rhea" id="RHEA:14433"/>
        <dbReference type="Rhea" id="RHEA-COMP:10465"/>
        <dbReference type="Rhea" id="RHEA-COMP:10468"/>
        <dbReference type="ChEBI" id="CHEBI:30616"/>
        <dbReference type="ChEBI" id="CHEBI:33019"/>
        <dbReference type="ChEBI" id="CHEBI:37563"/>
        <dbReference type="ChEBI" id="CHEBI:74896"/>
        <dbReference type="ChEBI" id="CHEBI:83071"/>
        <dbReference type="EC" id="2.7.7.72"/>
    </reaction>
</comment>
<comment type="catalytic activity">
    <reaction evidence="1">
        <text>a tRNA with a 3' CCA end + 2 CTP + ATP = a tRNA with a 3' CCACCA end + 3 diphosphate</text>
        <dbReference type="Rhea" id="RHEA:76235"/>
        <dbReference type="Rhea" id="RHEA-COMP:10468"/>
        <dbReference type="Rhea" id="RHEA-COMP:18655"/>
        <dbReference type="ChEBI" id="CHEBI:30616"/>
        <dbReference type="ChEBI" id="CHEBI:33019"/>
        <dbReference type="ChEBI" id="CHEBI:37563"/>
        <dbReference type="ChEBI" id="CHEBI:83071"/>
        <dbReference type="ChEBI" id="CHEBI:195187"/>
    </reaction>
    <physiologicalReaction direction="left-to-right" evidence="1">
        <dbReference type="Rhea" id="RHEA:76236"/>
    </physiologicalReaction>
</comment>
<comment type="cofactor">
    <cofactor evidence="1">
        <name>Mg(2+)</name>
        <dbReference type="ChEBI" id="CHEBI:18420"/>
    </cofactor>
    <text evidence="1">Magnesium is required for nucleotidyltransferase activity.</text>
</comment>
<comment type="cofactor">
    <cofactor evidence="1">
        <name>Ni(2+)</name>
        <dbReference type="ChEBI" id="CHEBI:49786"/>
    </cofactor>
    <text evidence="1">Nickel for phosphatase activity.</text>
</comment>
<comment type="subunit">
    <text evidence="1">Monomer. Can also form homodimers and oligomers.</text>
</comment>
<comment type="domain">
    <text evidence="1">Comprises two domains: an N-terminal domain containing the nucleotidyltransferase activity and a C-terminal HD domain associated with both phosphodiesterase and phosphatase activities.</text>
</comment>
<comment type="miscellaneous">
    <text evidence="1">A single active site specifically recognizes both ATP and CTP and is responsible for their addition.</text>
</comment>
<comment type="similarity">
    <text evidence="1">Belongs to the tRNA nucleotidyltransferase/poly(A) polymerase family. Bacterial CCA-adding enzyme type 1 subfamily.</text>
</comment>
<evidence type="ECO:0000255" key="1">
    <source>
        <dbReference type="HAMAP-Rule" id="MF_01261"/>
    </source>
</evidence>
<protein>
    <recommendedName>
        <fullName evidence="1">Multifunctional CCA protein</fullName>
    </recommendedName>
    <domain>
        <recommendedName>
            <fullName evidence="1">CCA-adding enzyme</fullName>
            <ecNumber evidence="1">2.7.7.72</ecNumber>
        </recommendedName>
        <alternativeName>
            <fullName evidence="1">CCA tRNA nucleotidyltransferase</fullName>
        </alternativeName>
        <alternativeName>
            <fullName evidence="1">tRNA CCA-pyrophosphorylase</fullName>
        </alternativeName>
        <alternativeName>
            <fullName evidence="1">tRNA adenylyl-/cytidylyl-transferase</fullName>
        </alternativeName>
        <alternativeName>
            <fullName evidence="1">tRNA nucleotidyltransferase</fullName>
        </alternativeName>
        <alternativeName>
            <fullName evidence="1">tRNA-NT</fullName>
        </alternativeName>
    </domain>
    <domain>
        <recommendedName>
            <fullName evidence="1">2'-nucleotidase</fullName>
            <ecNumber evidence="1">3.1.3.-</ecNumber>
        </recommendedName>
    </domain>
    <domain>
        <recommendedName>
            <fullName evidence="1">2',3'-cyclic phosphodiesterase</fullName>
            <ecNumber evidence="1">3.1.4.-</ecNumber>
        </recommendedName>
    </domain>
    <domain>
        <recommendedName>
            <fullName evidence="1">Phosphatase</fullName>
            <ecNumber evidence="1">3.1.3.-</ecNumber>
        </recommendedName>
    </domain>
</protein>